<gene>
    <name evidence="1" type="primary">argH</name>
    <name type="ordered locus">Acry_0745</name>
</gene>
<comment type="catalytic activity">
    <reaction evidence="1">
        <text>2-(N(omega)-L-arginino)succinate = fumarate + L-arginine</text>
        <dbReference type="Rhea" id="RHEA:24020"/>
        <dbReference type="ChEBI" id="CHEBI:29806"/>
        <dbReference type="ChEBI" id="CHEBI:32682"/>
        <dbReference type="ChEBI" id="CHEBI:57472"/>
        <dbReference type="EC" id="4.3.2.1"/>
    </reaction>
</comment>
<comment type="pathway">
    <text evidence="1">Amino-acid biosynthesis; L-arginine biosynthesis; L-arginine from L-ornithine and carbamoyl phosphate: step 3/3.</text>
</comment>
<comment type="subcellular location">
    <subcellularLocation>
        <location evidence="1">Cytoplasm</location>
    </subcellularLocation>
</comment>
<comment type="similarity">
    <text evidence="1">Belongs to the lyase 1 family. Argininosuccinate lyase subfamily.</text>
</comment>
<proteinExistence type="inferred from homology"/>
<sequence>MTNSGADQAGTQPSRLQWGGRFAAGPASVMQAINASIGFDQRLWREDIEGSLAHAGMLAAMGIISAEDEAAIRAGLAEIAEAIAEGSFTFDPALEDIHTNIEAWLVARIGEAGRRLHTARSRNDQVATDFRLWVRNAIDSLDGQVRELMRALADRAAEHAATIMPGFTHLQTAQPVTLGHHLLAYVEMLSRDRGRLADARRRLNECPLGAAALAGTTFPIDRSMTAAALGFDRPTANSLDSVSDRDFALEFLSALSILAMHLSRFAEEIIIWTSAPYRFIRLSDAYTTGSSIMPQKRNPDAAELARAKAGRIFGALTGLLAVMKGLPLAYAKDMQEDKEPVFDAADAAELCLAAMTGMVRDMMPDVLRMRSVAGADFSTATDLADYLVRDLGLPFRTAHHVTGRIVSEAESRGLELVALPLSVMQEVEPRITEAVYDVLTIEASVAARRTLGGTAPDNVARAAARWQETLA</sequence>
<dbReference type="EC" id="4.3.2.1" evidence="1"/>
<dbReference type="EMBL" id="CP000697">
    <property type="protein sequence ID" value="ABQ29965.1"/>
    <property type="molecule type" value="Genomic_DNA"/>
</dbReference>
<dbReference type="SMR" id="A5FWI3"/>
<dbReference type="STRING" id="349163.Acry_0745"/>
<dbReference type="KEGG" id="acr:Acry_0745"/>
<dbReference type="eggNOG" id="COG0165">
    <property type="taxonomic scope" value="Bacteria"/>
</dbReference>
<dbReference type="HOGENOM" id="CLU_027272_2_3_5"/>
<dbReference type="UniPathway" id="UPA00068">
    <property type="reaction ID" value="UER00114"/>
</dbReference>
<dbReference type="Proteomes" id="UP000000245">
    <property type="component" value="Chromosome"/>
</dbReference>
<dbReference type="GO" id="GO:0005829">
    <property type="term" value="C:cytosol"/>
    <property type="evidence" value="ECO:0007669"/>
    <property type="project" value="TreeGrafter"/>
</dbReference>
<dbReference type="GO" id="GO:0004056">
    <property type="term" value="F:argininosuccinate lyase activity"/>
    <property type="evidence" value="ECO:0007669"/>
    <property type="project" value="UniProtKB-UniRule"/>
</dbReference>
<dbReference type="GO" id="GO:0042450">
    <property type="term" value="P:arginine biosynthetic process via ornithine"/>
    <property type="evidence" value="ECO:0007669"/>
    <property type="project" value="InterPro"/>
</dbReference>
<dbReference type="GO" id="GO:0006526">
    <property type="term" value="P:L-arginine biosynthetic process"/>
    <property type="evidence" value="ECO:0007669"/>
    <property type="project" value="UniProtKB-UniRule"/>
</dbReference>
<dbReference type="CDD" id="cd01359">
    <property type="entry name" value="Argininosuccinate_lyase"/>
    <property type="match status" value="1"/>
</dbReference>
<dbReference type="FunFam" id="1.10.275.10:FF:000002">
    <property type="entry name" value="Argininosuccinate lyase"/>
    <property type="match status" value="1"/>
</dbReference>
<dbReference type="FunFam" id="1.10.40.30:FF:000001">
    <property type="entry name" value="Argininosuccinate lyase"/>
    <property type="match status" value="1"/>
</dbReference>
<dbReference type="FunFam" id="1.20.200.10:FF:000015">
    <property type="entry name" value="argininosuccinate lyase isoform X2"/>
    <property type="match status" value="1"/>
</dbReference>
<dbReference type="Gene3D" id="1.10.40.30">
    <property type="entry name" value="Fumarase/aspartase (C-terminal domain)"/>
    <property type="match status" value="1"/>
</dbReference>
<dbReference type="Gene3D" id="1.20.200.10">
    <property type="entry name" value="Fumarase/aspartase (Central domain)"/>
    <property type="match status" value="1"/>
</dbReference>
<dbReference type="Gene3D" id="1.10.275.10">
    <property type="entry name" value="Fumarase/aspartase (N-terminal domain)"/>
    <property type="match status" value="1"/>
</dbReference>
<dbReference type="HAMAP" id="MF_00006">
    <property type="entry name" value="Arg_succ_lyase"/>
    <property type="match status" value="1"/>
</dbReference>
<dbReference type="InterPro" id="IPR029419">
    <property type="entry name" value="Arg_succ_lyase_C"/>
</dbReference>
<dbReference type="InterPro" id="IPR009049">
    <property type="entry name" value="Argininosuccinate_lyase"/>
</dbReference>
<dbReference type="InterPro" id="IPR024083">
    <property type="entry name" value="Fumarase/histidase_N"/>
</dbReference>
<dbReference type="InterPro" id="IPR020557">
    <property type="entry name" value="Fumarate_lyase_CS"/>
</dbReference>
<dbReference type="InterPro" id="IPR000362">
    <property type="entry name" value="Fumarate_lyase_fam"/>
</dbReference>
<dbReference type="InterPro" id="IPR022761">
    <property type="entry name" value="Fumarate_lyase_N"/>
</dbReference>
<dbReference type="InterPro" id="IPR008948">
    <property type="entry name" value="L-Aspartase-like"/>
</dbReference>
<dbReference type="NCBIfam" id="TIGR00838">
    <property type="entry name" value="argH"/>
    <property type="match status" value="1"/>
</dbReference>
<dbReference type="PANTHER" id="PTHR43814">
    <property type="entry name" value="ARGININOSUCCINATE LYASE"/>
    <property type="match status" value="1"/>
</dbReference>
<dbReference type="PANTHER" id="PTHR43814:SF1">
    <property type="entry name" value="ARGININOSUCCINATE LYASE"/>
    <property type="match status" value="1"/>
</dbReference>
<dbReference type="Pfam" id="PF14698">
    <property type="entry name" value="ASL_C2"/>
    <property type="match status" value="1"/>
</dbReference>
<dbReference type="Pfam" id="PF00206">
    <property type="entry name" value="Lyase_1"/>
    <property type="match status" value="1"/>
</dbReference>
<dbReference type="PRINTS" id="PR00145">
    <property type="entry name" value="ARGSUCLYASE"/>
</dbReference>
<dbReference type="PRINTS" id="PR00149">
    <property type="entry name" value="FUMRATELYASE"/>
</dbReference>
<dbReference type="SUPFAM" id="SSF48557">
    <property type="entry name" value="L-aspartase-like"/>
    <property type="match status" value="1"/>
</dbReference>
<dbReference type="PROSITE" id="PS00163">
    <property type="entry name" value="FUMARATE_LYASES"/>
    <property type="match status" value="1"/>
</dbReference>
<organism>
    <name type="scientific">Acidiphilium cryptum (strain JF-5)</name>
    <dbReference type="NCBI Taxonomy" id="349163"/>
    <lineage>
        <taxon>Bacteria</taxon>
        <taxon>Pseudomonadati</taxon>
        <taxon>Pseudomonadota</taxon>
        <taxon>Alphaproteobacteria</taxon>
        <taxon>Acetobacterales</taxon>
        <taxon>Acidocellaceae</taxon>
        <taxon>Acidiphilium</taxon>
    </lineage>
</organism>
<evidence type="ECO:0000255" key="1">
    <source>
        <dbReference type="HAMAP-Rule" id="MF_00006"/>
    </source>
</evidence>
<feature type="chain" id="PRO_0000321421" description="Argininosuccinate lyase">
    <location>
        <begin position="1"/>
        <end position="471"/>
    </location>
</feature>
<accession>A5FWI3</accession>
<protein>
    <recommendedName>
        <fullName evidence="1">Argininosuccinate lyase</fullName>
        <shortName evidence="1">ASAL</shortName>
        <ecNumber evidence="1">4.3.2.1</ecNumber>
    </recommendedName>
    <alternativeName>
        <fullName evidence="1">Arginosuccinase</fullName>
    </alternativeName>
</protein>
<name>ARLY_ACICJ</name>
<keyword id="KW-0028">Amino-acid biosynthesis</keyword>
<keyword id="KW-0055">Arginine biosynthesis</keyword>
<keyword id="KW-0963">Cytoplasm</keyword>
<keyword id="KW-0456">Lyase</keyword>
<keyword id="KW-1185">Reference proteome</keyword>
<reference key="1">
    <citation type="submission" date="2007-05" db="EMBL/GenBank/DDBJ databases">
        <title>Complete sequence of chromosome of Acidiphilium cryptum JF-5.</title>
        <authorList>
            <consortium name="US DOE Joint Genome Institute"/>
            <person name="Copeland A."/>
            <person name="Lucas S."/>
            <person name="Lapidus A."/>
            <person name="Barry K."/>
            <person name="Detter J.C."/>
            <person name="Glavina del Rio T."/>
            <person name="Hammon N."/>
            <person name="Israni S."/>
            <person name="Dalin E."/>
            <person name="Tice H."/>
            <person name="Pitluck S."/>
            <person name="Sims D."/>
            <person name="Brettin T."/>
            <person name="Bruce D."/>
            <person name="Han C."/>
            <person name="Schmutz J."/>
            <person name="Larimer F."/>
            <person name="Land M."/>
            <person name="Hauser L."/>
            <person name="Kyrpides N."/>
            <person name="Kim E."/>
            <person name="Magnuson T."/>
            <person name="Richardson P."/>
        </authorList>
    </citation>
    <scope>NUCLEOTIDE SEQUENCE [LARGE SCALE GENOMIC DNA]</scope>
    <source>
        <strain>JF-5</strain>
    </source>
</reference>